<reference key="1">
    <citation type="journal article" date="2012" name="Med. Chem. Commun.">
        <title>Comparative analysis of the biosynthetic systems for fungal bicyclo[2.2.2]diazaoctane indole alkaloids: the (+)/(-)-notoamide, paraherquamide and malbrancheamide pathways.</title>
        <authorList>
            <person name="Li S."/>
            <person name="Anand K."/>
            <person name="Tran H."/>
            <person name="Yu F."/>
            <person name="Finefield J.M."/>
            <person name="Sunderhaus J.D."/>
            <person name="McAfoos T.J."/>
            <person name="Tsukamoto S."/>
            <person name="Williams R.M."/>
            <person name="Sherman D.H."/>
        </authorList>
    </citation>
    <scope>NUCLEOTIDE SEQUENCE [GENOMIC DNA]</scope>
    <scope>FUNCTION</scope>
    <source>
        <strain>NRRL 35600</strain>
    </source>
</reference>
<reference key="2">
    <citation type="journal article" date="2007" name="Angew. Chem. Int. Ed.">
        <title>Notoamides A-D: prenylated indole alkaloids isolated from a marine-derived fungus, Aspergillus sp.</title>
        <authorList>
            <person name="Kato H."/>
            <person name="Yoshida T."/>
            <person name="Tokue T."/>
            <person name="Nojiri Y."/>
            <person name="Hirota H."/>
            <person name="Ohta T."/>
            <person name="Williams R.M."/>
            <person name="Tsukamoto S."/>
        </authorList>
    </citation>
    <scope>BIOTECHNOLOGY</scope>
</reference>
<reference key="3">
    <citation type="journal article" date="2013" name="Appl. Microbiol. Biotechnol.">
        <title>Identification of a brevianamide F reverse prenyltransferase BrePT from Aspergillus versicolor with a broad substrate specificity towards tryptophan-containing cyclic dipeptides.</title>
        <authorList>
            <person name="Yin S."/>
            <person name="Yu X."/>
            <person name="Wang Q."/>
            <person name="Liu X.Q."/>
            <person name="Li S.M."/>
        </authorList>
    </citation>
    <scope>FUNCTION</scope>
</reference>
<dbReference type="EC" id="2.5.1.-" evidence="1"/>
<dbReference type="EMBL" id="JQ708194">
    <property type="protein sequence ID" value="AGC83574.1"/>
    <property type="molecule type" value="Genomic_DNA"/>
</dbReference>
<dbReference type="SMR" id="L7WRX9"/>
<dbReference type="VEuPathDB" id="FungiDB:ASPVEDRAFT_187638"/>
<dbReference type="GO" id="GO:0004659">
    <property type="term" value="F:prenyltransferase activity"/>
    <property type="evidence" value="ECO:0007669"/>
    <property type="project" value="UniProtKB-KW"/>
</dbReference>
<dbReference type="GO" id="GO:0009820">
    <property type="term" value="P:alkaloid metabolic process"/>
    <property type="evidence" value="ECO:0007669"/>
    <property type="project" value="UniProtKB-KW"/>
</dbReference>
<dbReference type="CDD" id="cd13929">
    <property type="entry name" value="PT-DMATS_CymD"/>
    <property type="match status" value="1"/>
</dbReference>
<dbReference type="InterPro" id="IPR033964">
    <property type="entry name" value="Aro_prenylTrfase"/>
</dbReference>
<dbReference type="InterPro" id="IPR017795">
    <property type="entry name" value="Aro_prenylTrfase_DMATS"/>
</dbReference>
<dbReference type="InterPro" id="IPR012148">
    <property type="entry name" value="DMATS-type_fun"/>
</dbReference>
<dbReference type="NCBIfam" id="TIGR03429">
    <property type="entry name" value="arom_pren_DMATS"/>
    <property type="match status" value="1"/>
</dbReference>
<dbReference type="PANTHER" id="PTHR40627">
    <property type="entry name" value="INDOLE PRENYLTRANSFERASE TDIB-RELATED"/>
    <property type="match status" value="1"/>
</dbReference>
<dbReference type="PANTHER" id="PTHR40627:SF3">
    <property type="entry name" value="PRENYLTRANSFERASE ASQH2-RELATED"/>
    <property type="match status" value="1"/>
</dbReference>
<dbReference type="Pfam" id="PF11991">
    <property type="entry name" value="Trp_DMAT"/>
    <property type="match status" value="1"/>
</dbReference>
<dbReference type="PIRSF" id="PIRSF000509">
    <property type="entry name" value="Trp_DMAT"/>
    <property type="match status" value="1"/>
</dbReference>
<dbReference type="SFLD" id="SFLDS00036">
    <property type="entry name" value="Aromatic_Prenyltransferase"/>
    <property type="match status" value="1"/>
</dbReference>
<dbReference type="SFLD" id="SFLDG01162">
    <property type="entry name" value="I"/>
    <property type="match status" value="1"/>
</dbReference>
<gene>
    <name evidence="6" type="primary">notC'</name>
</gene>
<sequence>MAIEESPTYAEPGPYEALSRFSSLTREDHRKWWEHTGPVLEKVLKDSGYELQSQYTYLYFVQQHLVPYLGTFPTRGEDEHRWQSNLTPYKVPYELSWNISNKVVRISWDPVCDASGTEADAFNKKAIHDCTRQIAQLSNTIVLDRYRILHQELVISDQEEQELLRRDDLPKSGRGQHNLAVDFQNGGIALKVYFYPYMKFLATGSPVEQLFFAAIEKIGTADIQEPVKMLRCFLSPSFDDGKPSVDQKVFPSLLACDLCDPSKSRIKYYVIDKWVKWERIASLWTIGGRRLEDPSCAKGLALLKELWDLLAIPEGDRGDIWPNLVLGQPPTHLMTTMANYTLSPASRFPEPQVYLTTFGMNDMAIMDALTAFYERAGLTDMAKSYKKNVQSYYPNLDLSQTNWVHEAISFSYRNSKPYLSVYYSPF</sequence>
<comment type="function">
    <text evidence="4 5 8">Prenyltransferase; part of the gene cluster that mediates the biosynthesis of notoamide, a fungal indole alkaloid that belongs to a family of natural products containing a characteristic bicyclo[2.2.2]diazaoctane core (PubMed:23213353). The first step of notoamide biosynthesis involves coupling of L-proline and L-tryptophan by the bimodular NRPS notE', to produce cyclo-L-tryptophan-L-proline called brevianamide F (Probable). The reverse prenyltransferase notF' then acts as a deoxybrevianamide E synthase and converts brevianamide F to deoxybrevianamide E via reverse prenylation at C-2 of the indole ring leading to the bicyclo[2.2.2]diazaoctane core (Probable) (PubMed:22660767). Deoxybrevianamide E is further hydroxylated at C-6 of the indole ring, likely catalyzed by the cytochrome P450 monooxygenase notG', to yield 6-hydroxy-deoxybrevianamide E (Probable). 6-hydroxy-deoxybrevianamide E is a specific substrate of the prenyltransferase notC' for normal prenylation at C-7 to produce 6-hydroxy-7-prenyl-deoxybrevianamide, also called notoamide S (Probable). As the proposed pivotal branching point in notoamide biosynthesis, notoamide S can be diverted to notoamide E through an oxidative pyran ring closure putatively catalyzed by either notH' cytochrome P450 monooxygenase or the notD' FAD-linked oxidoreductase (Probable). This step would be followed by an indole 2,3-epoxidation-initiated pinacol-like rearrangement catalyzed by the notB' FAD-dependent monooxygenase leading to the formation of notoamide C and notoamide D (Probable). On the other hand notoamide S is converted to notoamide T by notH' (or notD'), a bifunctional oxidase that also functions as the intramolecular Diels-Alderase responsible for generation of (-)-notoamide T (Probable). To generate antipodal (+)-notoaminide T, notH (or notD) in Aspergillus strain MF297-2 is expected to catalyze a Diels-Alder reaction leading to the opposite stereochemistry (Probable). The remaining oxidoreductase notD' (or notH') likely catalyzes the oxidative pyran ring formation to yield (-)-stephacidin A (Probable). The FAD-dependent monooxygenase notI' is highly similar to notB' and is predicted to catalyze a similar conversion from (-)-stephacidin A to (+)-notoamide B via the 2,3-epoxidation of (-)-stephacidin A followed by a pinacol-type rearrangement (Probable). Finally, it remains unclear which enzyme could be responsible for the final hydroxylation steps leading to notoamide A and sclerotiamide (Probable).</text>
</comment>
<comment type="catalytic activity">
    <reaction evidence="1">
        <text>6-hydroxydeoxybrevianamide E + dimethylallyl diphosphate = notoamide S + diphosphate</text>
        <dbReference type="Rhea" id="RHEA:62344"/>
        <dbReference type="ChEBI" id="CHEBI:33019"/>
        <dbReference type="ChEBI" id="CHEBI:57623"/>
        <dbReference type="ChEBI" id="CHEBI:145682"/>
        <dbReference type="ChEBI" id="CHEBI:145683"/>
    </reaction>
    <physiologicalReaction direction="left-to-right" evidence="1">
        <dbReference type="Rhea" id="RHEA:62345"/>
    </physiologicalReaction>
</comment>
<comment type="pathway">
    <text evidence="1">Alkaloid biosynthesis.</text>
</comment>
<comment type="biotechnology">
    <text evidence="3">Notoamides have been shown to exhibit antitumoral activities (PubMed:17304611). Notoamides A-C show moderate cytotoxicity against HeLa and L1210 cells with IC(50) values in the range of 22-52 mg/ml, but the IC(50) value of notoamide D is greater than 100 mg/ml (PubMed:17304611). Moreover, notoamide C induces G2/M-cell cycle arrest at a concentration of 6.3 mg/ml (PubMed:17304611).</text>
</comment>
<comment type="similarity">
    <text evidence="7">Belongs to the tryptophan dimethylallyltransferase family.</text>
</comment>
<organism>
    <name type="scientific">Aspergillus versicolor</name>
    <dbReference type="NCBI Taxonomy" id="46472"/>
    <lineage>
        <taxon>Eukaryota</taxon>
        <taxon>Fungi</taxon>
        <taxon>Dikarya</taxon>
        <taxon>Ascomycota</taxon>
        <taxon>Pezizomycotina</taxon>
        <taxon>Eurotiomycetes</taxon>
        <taxon>Eurotiomycetidae</taxon>
        <taxon>Eurotiales</taxon>
        <taxon>Aspergillaceae</taxon>
        <taxon>Aspergillus</taxon>
        <taxon>Aspergillus subgen. Nidulantes</taxon>
    </lineage>
</organism>
<name>NOTC_ASPVE</name>
<feature type="chain" id="PRO_0000448810" description="6-Hydroxy-7-prenyldeoxybrevianamide E synthase notC'">
    <location>
        <begin position="1"/>
        <end position="426"/>
    </location>
</feature>
<feature type="binding site" evidence="2">
    <location>
        <position position="94"/>
    </location>
    <ligand>
        <name>substrate</name>
    </ligand>
</feature>
<feature type="binding site" evidence="2">
    <location>
        <position position="105"/>
    </location>
    <ligand>
        <name>dimethylallyl diphosphate</name>
        <dbReference type="ChEBI" id="CHEBI:57623"/>
    </ligand>
</feature>
<feature type="binding site" evidence="2">
    <location>
        <position position="191"/>
    </location>
    <ligand>
        <name>dimethylallyl diphosphate</name>
        <dbReference type="ChEBI" id="CHEBI:57623"/>
    </ligand>
</feature>
<feature type="binding site" evidence="2">
    <location>
        <position position="193"/>
    </location>
    <ligand>
        <name>dimethylallyl diphosphate</name>
        <dbReference type="ChEBI" id="CHEBI:57623"/>
    </ligand>
</feature>
<feature type="binding site" evidence="2">
    <location>
        <position position="195"/>
    </location>
    <ligand>
        <name>substrate</name>
    </ligand>
</feature>
<feature type="binding site" evidence="2">
    <location>
        <position position="267"/>
    </location>
    <ligand>
        <name>dimethylallyl diphosphate</name>
        <dbReference type="ChEBI" id="CHEBI:57623"/>
    </ligand>
</feature>
<feature type="binding site" evidence="2">
    <location>
        <position position="269"/>
    </location>
    <ligand>
        <name>dimethylallyl diphosphate</name>
        <dbReference type="ChEBI" id="CHEBI:57623"/>
    </ligand>
</feature>
<feature type="binding site" evidence="2">
    <location>
        <position position="352"/>
    </location>
    <ligand>
        <name>dimethylallyl diphosphate</name>
        <dbReference type="ChEBI" id="CHEBI:57623"/>
    </ligand>
</feature>
<feature type="binding site" evidence="2">
    <location>
        <position position="354"/>
    </location>
    <ligand>
        <name>dimethylallyl diphosphate</name>
        <dbReference type="ChEBI" id="CHEBI:57623"/>
    </ligand>
</feature>
<feature type="binding site" evidence="2">
    <location>
        <position position="418"/>
    </location>
    <ligand>
        <name>dimethylallyl diphosphate</name>
        <dbReference type="ChEBI" id="CHEBI:57623"/>
    </ligand>
</feature>
<feature type="binding site" evidence="2">
    <location>
        <position position="422"/>
    </location>
    <ligand>
        <name>dimethylallyl diphosphate</name>
        <dbReference type="ChEBI" id="CHEBI:57623"/>
    </ligand>
</feature>
<protein>
    <recommendedName>
        <fullName evidence="1">6-Hydroxy-7-prenyldeoxybrevianamide E synthase notC'</fullName>
        <ecNumber evidence="1">2.5.1.-</ecNumber>
    </recommendedName>
    <alternativeName>
        <fullName evidence="6">Notoamide biosynthesis cluster protein C'</fullName>
    </alternativeName>
    <alternativeName>
        <fullName evidence="6">Prenyltransferase notC</fullName>
    </alternativeName>
</protein>
<evidence type="ECO:0000250" key="1">
    <source>
        <dbReference type="UniProtKB" id="E0Y3X0"/>
    </source>
</evidence>
<evidence type="ECO:0000250" key="2">
    <source>
        <dbReference type="UniProtKB" id="Q4WAW7"/>
    </source>
</evidence>
<evidence type="ECO:0000269" key="3">
    <source>
    </source>
</evidence>
<evidence type="ECO:0000269" key="4">
    <source>
    </source>
</evidence>
<evidence type="ECO:0000269" key="5">
    <source>
    </source>
</evidence>
<evidence type="ECO:0000303" key="6">
    <source>
    </source>
</evidence>
<evidence type="ECO:0000305" key="7"/>
<evidence type="ECO:0000305" key="8">
    <source>
    </source>
</evidence>
<proteinExistence type="evidence at protein level"/>
<keyword id="KW-0017">Alkaloid metabolism</keyword>
<keyword id="KW-0637">Prenyltransferase</keyword>
<keyword id="KW-0808">Transferase</keyword>
<accession>L7WRX9</accession>